<feature type="chain" id="PRO_1000043659" description="GTP cyclohydrolase 1">
    <location>
        <begin position="1"/>
        <end position="189"/>
    </location>
</feature>
<feature type="binding site" evidence="2">
    <location>
        <position position="78"/>
    </location>
    <ligand>
        <name>Zn(2+)</name>
        <dbReference type="ChEBI" id="CHEBI:29105"/>
    </ligand>
</feature>
<feature type="binding site" evidence="2">
    <location>
        <position position="81"/>
    </location>
    <ligand>
        <name>Zn(2+)</name>
        <dbReference type="ChEBI" id="CHEBI:29105"/>
    </ligand>
</feature>
<feature type="binding site" evidence="2">
    <location>
        <position position="150"/>
    </location>
    <ligand>
        <name>Zn(2+)</name>
        <dbReference type="ChEBI" id="CHEBI:29105"/>
    </ligand>
</feature>
<sequence>MAKVNLEQIEHAVRLILEAIGDDPNREGVLDTPKRVAKMYAEVFSGMHEDPKEHLHKVFGEDHEELVLVKDIPFYSMCEHHLVPFYGVAHVAYIPQGGKVTGLSKLARTVDTIARRPQLQERITSTVANSIMEVLEPHGVMVVVEAEHMCMTMRGVKKPGAKTVTTAVRGVLENDAAARSEILSFIKTK</sequence>
<dbReference type="EC" id="3.5.4.16" evidence="2"/>
<dbReference type="EMBL" id="AE017194">
    <property type="protein sequence ID" value="AAS40567.1"/>
    <property type="molecule type" value="Genomic_DNA"/>
</dbReference>
<dbReference type="SMR" id="Q73AY4"/>
<dbReference type="KEGG" id="bca:BCE_1638"/>
<dbReference type="HOGENOM" id="CLU_049768_3_3_9"/>
<dbReference type="UniPathway" id="UPA00848">
    <property type="reaction ID" value="UER00151"/>
</dbReference>
<dbReference type="Proteomes" id="UP000002527">
    <property type="component" value="Chromosome"/>
</dbReference>
<dbReference type="GO" id="GO:0005737">
    <property type="term" value="C:cytoplasm"/>
    <property type="evidence" value="ECO:0007669"/>
    <property type="project" value="TreeGrafter"/>
</dbReference>
<dbReference type="GO" id="GO:0005525">
    <property type="term" value="F:GTP binding"/>
    <property type="evidence" value="ECO:0007669"/>
    <property type="project" value="UniProtKB-KW"/>
</dbReference>
<dbReference type="GO" id="GO:0003934">
    <property type="term" value="F:GTP cyclohydrolase I activity"/>
    <property type="evidence" value="ECO:0007669"/>
    <property type="project" value="UniProtKB-UniRule"/>
</dbReference>
<dbReference type="GO" id="GO:0008270">
    <property type="term" value="F:zinc ion binding"/>
    <property type="evidence" value="ECO:0007669"/>
    <property type="project" value="UniProtKB-UniRule"/>
</dbReference>
<dbReference type="GO" id="GO:0006730">
    <property type="term" value="P:one-carbon metabolic process"/>
    <property type="evidence" value="ECO:0007669"/>
    <property type="project" value="UniProtKB-UniRule"/>
</dbReference>
<dbReference type="GO" id="GO:0006729">
    <property type="term" value="P:tetrahydrobiopterin biosynthetic process"/>
    <property type="evidence" value="ECO:0007669"/>
    <property type="project" value="TreeGrafter"/>
</dbReference>
<dbReference type="GO" id="GO:0046654">
    <property type="term" value="P:tetrahydrofolate biosynthetic process"/>
    <property type="evidence" value="ECO:0007669"/>
    <property type="project" value="UniProtKB-UniRule"/>
</dbReference>
<dbReference type="CDD" id="cd00642">
    <property type="entry name" value="GTP_cyclohydro1"/>
    <property type="match status" value="1"/>
</dbReference>
<dbReference type="FunFam" id="1.10.286.10:FF:000001">
    <property type="entry name" value="GTP cyclohydrolase 1"/>
    <property type="match status" value="1"/>
</dbReference>
<dbReference type="FunFam" id="3.30.1130.10:FF:000001">
    <property type="entry name" value="GTP cyclohydrolase 1"/>
    <property type="match status" value="1"/>
</dbReference>
<dbReference type="Gene3D" id="1.10.286.10">
    <property type="match status" value="1"/>
</dbReference>
<dbReference type="Gene3D" id="3.30.1130.10">
    <property type="match status" value="1"/>
</dbReference>
<dbReference type="HAMAP" id="MF_00223">
    <property type="entry name" value="FolE"/>
    <property type="match status" value="1"/>
</dbReference>
<dbReference type="InterPro" id="IPR043133">
    <property type="entry name" value="GTP-CH-I_C/QueF"/>
</dbReference>
<dbReference type="InterPro" id="IPR043134">
    <property type="entry name" value="GTP-CH-I_N"/>
</dbReference>
<dbReference type="InterPro" id="IPR001474">
    <property type="entry name" value="GTP_CycHdrlase_I"/>
</dbReference>
<dbReference type="InterPro" id="IPR018234">
    <property type="entry name" value="GTP_CycHdrlase_I_CS"/>
</dbReference>
<dbReference type="InterPro" id="IPR020602">
    <property type="entry name" value="GTP_CycHdrlase_I_dom"/>
</dbReference>
<dbReference type="NCBIfam" id="TIGR00063">
    <property type="entry name" value="folE"/>
    <property type="match status" value="1"/>
</dbReference>
<dbReference type="NCBIfam" id="NF006825">
    <property type="entry name" value="PRK09347.1-2"/>
    <property type="match status" value="1"/>
</dbReference>
<dbReference type="NCBIfam" id="NF006826">
    <property type="entry name" value="PRK09347.1-3"/>
    <property type="match status" value="1"/>
</dbReference>
<dbReference type="PANTHER" id="PTHR11109:SF7">
    <property type="entry name" value="GTP CYCLOHYDROLASE 1"/>
    <property type="match status" value="1"/>
</dbReference>
<dbReference type="PANTHER" id="PTHR11109">
    <property type="entry name" value="GTP CYCLOHYDROLASE I"/>
    <property type="match status" value="1"/>
</dbReference>
<dbReference type="Pfam" id="PF01227">
    <property type="entry name" value="GTP_cyclohydroI"/>
    <property type="match status" value="1"/>
</dbReference>
<dbReference type="SUPFAM" id="SSF55620">
    <property type="entry name" value="Tetrahydrobiopterin biosynthesis enzymes-like"/>
    <property type="match status" value="1"/>
</dbReference>
<dbReference type="PROSITE" id="PS00859">
    <property type="entry name" value="GTP_CYCLOHYDROL_1_1"/>
    <property type="match status" value="1"/>
</dbReference>
<dbReference type="PROSITE" id="PS00860">
    <property type="entry name" value="GTP_CYCLOHYDROL_1_2"/>
    <property type="match status" value="1"/>
</dbReference>
<keyword id="KW-0342">GTP-binding</keyword>
<keyword id="KW-0378">Hydrolase</keyword>
<keyword id="KW-0479">Metal-binding</keyword>
<keyword id="KW-0547">Nucleotide-binding</keyword>
<keyword id="KW-0554">One-carbon metabolism</keyword>
<keyword id="KW-0862">Zinc</keyword>
<name>GCH1_BACC1</name>
<organism>
    <name type="scientific">Bacillus cereus (strain ATCC 10987 / NRS 248)</name>
    <dbReference type="NCBI Taxonomy" id="222523"/>
    <lineage>
        <taxon>Bacteria</taxon>
        <taxon>Bacillati</taxon>
        <taxon>Bacillota</taxon>
        <taxon>Bacilli</taxon>
        <taxon>Bacillales</taxon>
        <taxon>Bacillaceae</taxon>
        <taxon>Bacillus</taxon>
        <taxon>Bacillus cereus group</taxon>
    </lineage>
</organism>
<evidence type="ECO:0000250" key="1"/>
<evidence type="ECO:0000255" key="2">
    <source>
        <dbReference type="HAMAP-Rule" id="MF_00223"/>
    </source>
</evidence>
<reference key="1">
    <citation type="journal article" date="2004" name="Nucleic Acids Res.">
        <title>The genome sequence of Bacillus cereus ATCC 10987 reveals metabolic adaptations and a large plasmid related to Bacillus anthracis pXO1.</title>
        <authorList>
            <person name="Rasko D.A."/>
            <person name="Ravel J."/>
            <person name="Oekstad O.A."/>
            <person name="Helgason E."/>
            <person name="Cer R.Z."/>
            <person name="Jiang L."/>
            <person name="Shores K.A."/>
            <person name="Fouts D.E."/>
            <person name="Tourasse N.J."/>
            <person name="Angiuoli S.V."/>
            <person name="Kolonay J.F."/>
            <person name="Nelson W.C."/>
            <person name="Kolstoe A.-B."/>
            <person name="Fraser C.M."/>
            <person name="Read T.D."/>
        </authorList>
    </citation>
    <scope>NUCLEOTIDE SEQUENCE [LARGE SCALE GENOMIC DNA]</scope>
    <source>
        <strain>ATCC 10987 / NRS 248</strain>
    </source>
</reference>
<comment type="catalytic activity">
    <reaction evidence="2">
        <text>GTP + H2O = 7,8-dihydroneopterin 3'-triphosphate + formate + H(+)</text>
        <dbReference type="Rhea" id="RHEA:17473"/>
        <dbReference type="ChEBI" id="CHEBI:15377"/>
        <dbReference type="ChEBI" id="CHEBI:15378"/>
        <dbReference type="ChEBI" id="CHEBI:15740"/>
        <dbReference type="ChEBI" id="CHEBI:37565"/>
        <dbReference type="ChEBI" id="CHEBI:58462"/>
        <dbReference type="EC" id="3.5.4.16"/>
    </reaction>
</comment>
<comment type="pathway">
    <text evidence="2">Cofactor biosynthesis; 7,8-dihydroneopterin triphosphate biosynthesis; 7,8-dihydroneopterin triphosphate from GTP: step 1/1.</text>
</comment>
<comment type="subunit">
    <text evidence="1">Toroid-shaped homodecamer, composed of two pentamers of five dimers.</text>
</comment>
<comment type="similarity">
    <text evidence="2">Belongs to the GTP cyclohydrolase I family.</text>
</comment>
<protein>
    <recommendedName>
        <fullName evidence="2">GTP cyclohydrolase 1</fullName>
        <ecNumber evidence="2">3.5.4.16</ecNumber>
    </recommendedName>
    <alternativeName>
        <fullName evidence="2">GTP cyclohydrolase I</fullName>
        <shortName evidence="2">GTP-CH-I</shortName>
    </alternativeName>
</protein>
<accession>Q73AY4</accession>
<gene>
    <name evidence="2" type="primary">folE</name>
    <name type="ordered locus">BCE_1638</name>
</gene>
<proteinExistence type="inferred from homology"/>